<organism>
    <name type="scientific">Helicobacter pylori (strain P12)</name>
    <dbReference type="NCBI Taxonomy" id="570508"/>
    <lineage>
        <taxon>Bacteria</taxon>
        <taxon>Pseudomonadati</taxon>
        <taxon>Campylobacterota</taxon>
        <taxon>Epsilonproteobacteria</taxon>
        <taxon>Campylobacterales</taxon>
        <taxon>Helicobacteraceae</taxon>
        <taxon>Helicobacter</taxon>
    </lineage>
</organism>
<proteinExistence type="inferred from homology"/>
<evidence type="ECO:0000255" key="1">
    <source>
        <dbReference type="HAMAP-Rule" id="MF_00240"/>
    </source>
</evidence>
<sequence length="184" mass="21405">MKAFLKILMVLIFVSVAYAKSPPTLSKEEEVLQHLQSFSAHFKQVLKNEKPLVYYGVLKAKAPNWALWVYEKPLKKEIYMNDKEVVIYEPNLFQATITPLKDKTDFFTILKRLKKQDDGSFKTTINKTTYRLVFKDGKPFSLEFKDGMNNLVTITFSQAEINPTIADEIFVFKPKDENIDIVRQ</sequence>
<protein>
    <recommendedName>
        <fullName evidence="1">Outer-membrane lipoprotein carrier protein</fullName>
    </recommendedName>
</protein>
<accession>B6JM17</accession>
<comment type="function">
    <text evidence="1">Participates in the translocation of lipoproteins from the inner membrane to the outer membrane. Only forms a complex with a lipoprotein if the residue after the N-terminal Cys is not an aspartate (The Asp acts as a targeting signal to indicate that the lipoprotein should stay in the inner membrane).</text>
</comment>
<comment type="subunit">
    <text evidence="1">Monomer.</text>
</comment>
<comment type="subcellular location">
    <subcellularLocation>
        <location evidence="1">Periplasm</location>
    </subcellularLocation>
</comment>
<comment type="similarity">
    <text evidence="1">Belongs to the LolA family.</text>
</comment>
<name>LOLA_HELP2</name>
<keyword id="KW-0143">Chaperone</keyword>
<keyword id="KW-0574">Periplasm</keyword>
<keyword id="KW-0653">Protein transport</keyword>
<keyword id="KW-0732">Signal</keyword>
<keyword id="KW-0813">Transport</keyword>
<reference key="1">
    <citation type="submission" date="2008-10" db="EMBL/GenBank/DDBJ databases">
        <title>The complete genome sequence of Helicobacter pylori strain P12.</title>
        <authorList>
            <person name="Fischer W."/>
            <person name="Windhager L."/>
            <person name="Karnholz A."/>
            <person name="Zeiller M."/>
            <person name="Zimmer R."/>
            <person name="Haas R."/>
        </authorList>
    </citation>
    <scope>NUCLEOTIDE SEQUENCE [LARGE SCALE GENOMIC DNA]</scope>
    <source>
        <strain>P12</strain>
    </source>
</reference>
<dbReference type="EMBL" id="CP001217">
    <property type="protein sequence ID" value="ACJ07945.1"/>
    <property type="molecule type" value="Genomic_DNA"/>
</dbReference>
<dbReference type="SMR" id="B6JM17"/>
<dbReference type="KEGG" id="hpp:HPP12_0793"/>
<dbReference type="HOGENOM" id="CLU_125914_0_0_7"/>
<dbReference type="Proteomes" id="UP000008198">
    <property type="component" value="Chromosome"/>
</dbReference>
<dbReference type="GO" id="GO:0042597">
    <property type="term" value="C:periplasmic space"/>
    <property type="evidence" value="ECO:0007669"/>
    <property type="project" value="UniProtKB-SubCell"/>
</dbReference>
<dbReference type="GO" id="GO:0042953">
    <property type="term" value="P:lipoprotein transport"/>
    <property type="evidence" value="ECO:0007669"/>
    <property type="project" value="InterPro"/>
</dbReference>
<dbReference type="CDD" id="cd16325">
    <property type="entry name" value="LolA"/>
    <property type="match status" value="1"/>
</dbReference>
<dbReference type="FunFam" id="2.50.20.10:FF:000013">
    <property type="entry name" value="Outer-membrane lipoprotein carrier protein"/>
    <property type="match status" value="1"/>
</dbReference>
<dbReference type="Gene3D" id="2.50.20.10">
    <property type="entry name" value="Lipoprotein localisation LolA/LolB/LppX"/>
    <property type="match status" value="1"/>
</dbReference>
<dbReference type="HAMAP" id="MF_00240">
    <property type="entry name" value="LolA"/>
    <property type="match status" value="1"/>
</dbReference>
<dbReference type="InterPro" id="IPR029046">
    <property type="entry name" value="LolA/LolB/LppX"/>
</dbReference>
<dbReference type="InterPro" id="IPR004564">
    <property type="entry name" value="OM_lipoprot_carrier_LolA-like"/>
</dbReference>
<dbReference type="InterPro" id="IPR018323">
    <property type="entry name" value="OM_lipoprot_carrier_LolA_Pbac"/>
</dbReference>
<dbReference type="NCBIfam" id="NF000663">
    <property type="entry name" value="PRK00031.2-1"/>
    <property type="match status" value="1"/>
</dbReference>
<dbReference type="PANTHER" id="PTHR35869">
    <property type="entry name" value="OUTER-MEMBRANE LIPOPROTEIN CARRIER PROTEIN"/>
    <property type="match status" value="1"/>
</dbReference>
<dbReference type="PANTHER" id="PTHR35869:SF1">
    <property type="entry name" value="OUTER-MEMBRANE LIPOPROTEIN CARRIER PROTEIN"/>
    <property type="match status" value="1"/>
</dbReference>
<dbReference type="Pfam" id="PF03548">
    <property type="entry name" value="LolA"/>
    <property type="match status" value="1"/>
</dbReference>
<dbReference type="SUPFAM" id="SSF89392">
    <property type="entry name" value="Prokaryotic lipoproteins and lipoprotein localization factors"/>
    <property type="match status" value="1"/>
</dbReference>
<gene>
    <name evidence="1" type="primary">lolA</name>
    <name type="ordered locus">HPP12_0793</name>
</gene>
<feature type="signal peptide" evidence="1">
    <location>
        <begin position="1"/>
        <end position="19"/>
    </location>
</feature>
<feature type="chain" id="PRO_1000100720" description="Outer-membrane lipoprotein carrier protein">
    <location>
        <begin position="20"/>
        <end position="184"/>
    </location>
</feature>